<gene>
    <name type="primary">SEL1L3</name>
    <name type="synonym">KIAA0746</name>
</gene>
<sequence>MQRRGAGLGWPRQQQQQPPPLAVGPRAAAMVPSGGVPQGLGGRSACALLLLCYLNVVPSLGRQTSLTTSVIPKAEQSVAYKDFIYFTVFEGNVRNVSEVSVEYLCSQPCVVNLEAVVSSEFRSSIPVYKKRWKNEKHLHTSRTQIVHVKFPSIMVYRDDYFIRHSISVSAVIVRAWITHKYSGRDWNVKWEENLLHAVAKNYTLLQTIPPFERPFKDHQVCLEWNMGYIWNLRANRIPQCPLENDVVALLGFPYASSGENTGIVKKFPRFRNRELEATRRQRMDYPVFTVSLWLYLLHYCKANLCGILYFVDSNEMYGTPSVFLTEEGYLHIQMHLVKGEDLAVKTKFIIPLKEWFRLDISFNGGQIVVTTSIGQDLKSYHNQTISFREDFHYNDTAGYFIIGGSRYVAGIEGFFGPLKYYRLRSLHPAQIFNPLLEKQLAEQIKLYYERCAEVQEIVSVYASAAKHGGERQEACHLHNSYLDLQRRYGRPSMCRAFPWEKELKDKHPSLFQALLEMDLLTVPRNQNESVSEIGGKIFEKAVKRLSSIDGLHQISSIVPFLTDSSCCGYHKASYYLAVFYETGLNVPRDQLQGMLYSLVGGQGSERLSSMNLGYKHYQGIDNYPLDWELSYAYYSNIATKTPLDQHTLQGDQAYVETIRLKDDEILKVQTKEDGDVFMWLKHEATRGNAAAQQRLAQMLFWGQQGVAKNPEAAIEWYAKGALETEDPALIYDYAIVLFKGQGVKKNRRLALELMKKAASKGLHQAVNGLGWYYHKFKKNYAKAAKYWLKAEEMGNPDASYNLGVLHLDGIFPGVPGRNQTLAGEYFHKAAQGGHMEGTLWCSLYYITGNLETFPRDPEKAVVWAKHVAEKNGYLGHVIRKGLNAYLEGSWHEALLYYVLAAETGIEVSQTNLAHICEERPDLARRYLGVNCVWRYYNFSVFQIDAPSFAYLKMGDLYYYGHQNQSQDLELSVQMYAQAALDGDSQGFFNLALLIEEGTIIPHHILDFLEIDSTLHSNNISILQELYERCWSHSNEESFSPCSLAWLYLHLRLLWGAILHSALIYFLGTFLLSILIAWTVQYFQSVSASDPPPRPSQASPDTATSTASPAVTPAADASDQDQPTVTNNPEPRG</sequence>
<comment type="subcellular location">
    <subcellularLocation>
        <location evidence="5">Membrane</location>
        <topology evidence="5">Single-pass membrane protein</topology>
    </subcellularLocation>
</comment>
<comment type="alternative products">
    <event type="alternative splicing"/>
    <isoform>
        <id>Q68CR1-1</id>
        <name>1</name>
        <sequence type="displayed"/>
    </isoform>
    <isoform>
        <id>Q68CR1-2</id>
        <name>2</name>
        <sequence type="described" ref="VSP_031812"/>
    </isoform>
    <isoform>
        <id>Q68CR1-3</id>
        <name>3</name>
        <sequence type="described" ref="VSP_031811"/>
    </isoform>
</comment>
<comment type="sequence caution" evidence="5">
    <conflict type="miscellaneous discrepancy">
        <sequence resource="EMBL-CDS" id="AAH29422"/>
    </conflict>
    <text>Potential poly-A sequence.</text>
</comment>
<comment type="sequence caution" evidence="5">
    <conflict type="frameshift">
        <sequence resource="EMBL-CDS" id="AAH60867"/>
    </conflict>
</comment>
<name>SE1L3_HUMAN</name>
<organism>
    <name type="scientific">Homo sapiens</name>
    <name type="common">Human</name>
    <dbReference type="NCBI Taxonomy" id="9606"/>
    <lineage>
        <taxon>Eukaryota</taxon>
        <taxon>Metazoa</taxon>
        <taxon>Chordata</taxon>
        <taxon>Craniata</taxon>
        <taxon>Vertebrata</taxon>
        <taxon>Euteleostomi</taxon>
        <taxon>Mammalia</taxon>
        <taxon>Eutheria</taxon>
        <taxon>Euarchontoglires</taxon>
        <taxon>Primates</taxon>
        <taxon>Haplorrhini</taxon>
        <taxon>Catarrhini</taxon>
        <taxon>Hominidae</taxon>
        <taxon>Homo</taxon>
    </lineage>
</organism>
<keyword id="KW-0025">Alternative splicing</keyword>
<keyword id="KW-0325">Glycoprotein</keyword>
<keyword id="KW-0472">Membrane</keyword>
<keyword id="KW-0597">Phosphoprotein</keyword>
<keyword id="KW-1267">Proteomics identification</keyword>
<keyword id="KW-1185">Reference proteome</keyword>
<keyword id="KW-0677">Repeat</keyword>
<keyword id="KW-0812">Transmembrane</keyword>
<keyword id="KW-1133">Transmembrane helix</keyword>
<accession>Q68CR1</accession>
<accession>A0PJH6</accession>
<accession>A8K0X2</accession>
<accession>O94847</accession>
<accession>Q6P999</accession>
<accession>Q96G59</accession>
<protein>
    <recommendedName>
        <fullName>Protein sel-1 homolog 3</fullName>
    </recommendedName>
    <alternativeName>
        <fullName>Suppressor of lin-12-like protein 3</fullName>
        <shortName>Sel-1L3</shortName>
    </alternativeName>
</protein>
<reference key="1">
    <citation type="journal article" date="2004" name="Nat. Genet.">
        <title>Complete sequencing and characterization of 21,243 full-length human cDNAs.</title>
        <authorList>
            <person name="Ota T."/>
            <person name="Suzuki Y."/>
            <person name="Nishikawa T."/>
            <person name="Otsuki T."/>
            <person name="Sugiyama T."/>
            <person name="Irie R."/>
            <person name="Wakamatsu A."/>
            <person name="Hayashi K."/>
            <person name="Sato H."/>
            <person name="Nagai K."/>
            <person name="Kimura K."/>
            <person name="Makita H."/>
            <person name="Sekine M."/>
            <person name="Obayashi M."/>
            <person name="Nishi T."/>
            <person name="Shibahara T."/>
            <person name="Tanaka T."/>
            <person name="Ishii S."/>
            <person name="Yamamoto J."/>
            <person name="Saito K."/>
            <person name="Kawai Y."/>
            <person name="Isono Y."/>
            <person name="Nakamura Y."/>
            <person name="Nagahari K."/>
            <person name="Murakami K."/>
            <person name="Yasuda T."/>
            <person name="Iwayanagi T."/>
            <person name="Wagatsuma M."/>
            <person name="Shiratori A."/>
            <person name="Sudo H."/>
            <person name="Hosoiri T."/>
            <person name="Kaku Y."/>
            <person name="Kodaira H."/>
            <person name="Kondo H."/>
            <person name="Sugawara M."/>
            <person name="Takahashi M."/>
            <person name="Kanda K."/>
            <person name="Yokoi T."/>
            <person name="Furuya T."/>
            <person name="Kikkawa E."/>
            <person name="Omura Y."/>
            <person name="Abe K."/>
            <person name="Kamihara K."/>
            <person name="Katsuta N."/>
            <person name="Sato K."/>
            <person name="Tanikawa M."/>
            <person name="Yamazaki M."/>
            <person name="Ninomiya K."/>
            <person name="Ishibashi T."/>
            <person name="Yamashita H."/>
            <person name="Murakawa K."/>
            <person name="Fujimori K."/>
            <person name="Tanai H."/>
            <person name="Kimata M."/>
            <person name="Watanabe M."/>
            <person name="Hiraoka S."/>
            <person name="Chiba Y."/>
            <person name="Ishida S."/>
            <person name="Ono Y."/>
            <person name="Takiguchi S."/>
            <person name="Watanabe S."/>
            <person name="Yosida M."/>
            <person name="Hotuta T."/>
            <person name="Kusano J."/>
            <person name="Kanehori K."/>
            <person name="Takahashi-Fujii A."/>
            <person name="Hara H."/>
            <person name="Tanase T.-O."/>
            <person name="Nomura Y."/>
            <person name="Togiya S."/>
            <person name="Komai F."/>
            <person name="Hara R."/>
            <person name="Takeuchi K."/>
            <person name="Arita M."/>
            <person name="Imose N."/>
            <person name="Musashino K."/>
            <person name="Yuuki H."/>
            <person name="Oshima A."/>
            <person name="Sasaki N."/>
            <person name="Aotsuka S."/>
            <person name="Yoshikawa Y."/>
            <person name="Matsunawa H."/>
            <person name="Ichihara T."/>
            <person name="Shiohata N."/>
            <person name="Sano S."/>
            <person name="Moriya S."/>
            <person name="Momiyama H."/>
            <person name="Satoh N."/>
            <person name="Takami S."/>
            <person name="Terashima Y."/>
            <person name="Suzuki O."/>
            <person name="Nakagawa S."/>
            <person name="Senoh A."/>
            <person name="Mizoguchi H."/>
            <person name="Goto Y."/>
            <person name="Shimizu F."/>
            <person name="Wakebe H."/>
            <person name="Hishigaki H."/>
            <person name="Watanabe T."/>
            <person name="Sugiyama A."/>
            <person name="Takemoto M."/>
            <person name="Kawakami B."/>
            <person name="Yamazaki M."/>
            <person name="Watanabe K."/>
            <person name="Kumagai A."/>
            <person name="Itakura S."/>
            <person name="Fukuzumi Y."/>
            <person name="Fujimori Y."/>
            <person name="Komiyama M."/>
            <person name="Tashiro H."/>
            <person name="Tanigami A."/>
            <person name="Fujiwara T."/>
            <person name="Ono T."/>
            <person name="Yamada K."/>
            <person name="Fujii Y."/>
            <person name="Ozaki K."/>
            <person name="Hirao M."/>
            <person name="Ohmori Y."/>
            <person name="Kawabata A."/>
            <person name="Hikiji T."/>
            <person name="Kobatake N."/>
            <person name="Inagaki H."/>
            <person name="Ikema Y."/>
            <person name="Okamoto S."/>
            <person name="Okitani R."/>
            <person name="Kawakami T."/>
            <person name="Noguchi S."/>
            <person name="Itoh T."/>
            <person name="Shigeta K."/>
            <person name="Senba T."/>
            <person name="Matsumura K."/>
            <person name="Nakajima Y."/>
            <person name="Mizuno T."/>
            <person name="Morinaga M."/>
            <person name="Sasaki M."/>
            <person name="Togashi T."/>
            <person name="Oyama M."/>
            <person name="Hata H."/>
            <person name="Watanabe M."/>
            <person name="Komatsu T."/>
            <person name="Mizushima-Sugano J."/>
            <person name="Satoh T."/>
            <person name="Shirai Y."/>
            <person name="Takahashi Y."/>
            <person name="Nakagawa K."/>
            <person name="Okumura K."/>
            <person name="Nagase T."/>
            <person name="Nomura N."/>
            <person name="Kikuchi H."/>
            <person name="Masuho Y."/>
            <person name="Yamashita R."/>
            <person name="Nakai K."/>
            <person name="Yada T."/>
            <person name="Nakamura Y."/>
            <person name="Ohara O."/>
            <person name="Isogai T."/>
            <person name="Sugano S."/>
        </authorList>
    </citation>
    <scope>NUCLEOTIDE SEQUENCE [LARGE SCALE MRNA] (ISOFORM 3)</scope>
    <source>
        <tissue>Amygdala</tissue>
    </source>
</reference>
<reference key="2">
    <citation type="journal article" date="2007" name="BMC Genomics">
        <title>The full-ORF clone resource of the German cDNA consortium.</title>
        <authorList>
            <person name="Bechtel S."/>
            <person name="Rosenfelder H."/>
            <person name="Duda A."/>
            <person name="Schmidt C.P."/>
            <person name="Ernst U."/>
            <person name="Wellenreuther R."/>
            <person name="Mehrle A."/>
            <person name="Schuster C."/>
            <person name="Bahr A."/>
            <person name="Bloecker H."/>
            <person name="Heubner D."/>
            <person name="Hoerlein A."/>
            <person name="Michel G."/>
            <person name="Wedler H."/>
            <person name="Koehrer K."/>
            <person name="Ottenwaelder B."/>
            <person name="Poustka A."/>
            <person name="Wiemann S."/>
            <person name="Schupp I."/>
        </authorList>
    </citation>
    <scope>NUCLEOTIDE SEQUENCE [LARGE SCALE MRNA] (ISOFORM 2)</scope>
    <source>
        <tissue>Colon carcinoma</tissue>
    </source>
</reference>
<reference key="3">
    <citation type="journal article" date="2005" name="Nature">
        <title>Generation and annotation of the DNA sequences of human chromosomes 2 and 4.</title>
        <authorList>
            <person name="Hillier L.W."/>
            <person name="Graves T.A."/>
            <person name="Fulton R.S."/>
            <person name="Fulton L.A."/>
            <person name="Pepin K.H."/>
            <person name="Minx P."/>
            <person name="Wagner-McPherson C."/>
            <person name="Layman D."/>
            <person name="Wylie K."/>
            <person name="Sekhon M."/>
            <person name="Becker M.C."/>
            <person name="Fewell G.A."/>
            <person name="Delehaunty K.D."/>
            <person name="Miner T.L."/>
            <person name="Nash W.E."/>
            <person name="Kremitzki C."/>
            <person name="Oddy L."/>
            <person name="Du H."/>
            <person name="Sun H."/>
            <person name="Bradshaw-Cordum H."/>
            <person name="Ali J."/>
            <person name="Carter J."/>
            <person name="Cordes M."/>
            <person name="Harris A."/>
            <person name="Isak A."/>
            <person name="van Brunt A."/>
            <person name="Nguyen C."/>
            <person name="Du F."/>
            <person name="Courtney L."/>
            <person name="Kalicki J."/>
            <person name="Ozersky P."/>
            <person name="Abbott S."/>
            <person name="Armstrong J."/>
            <person name="Belter E.A."/>
            <person name="Caruso L."/>
            <person name="Cedroni M."/>
            <person name="Cotton M."/>
            <person name="Davidson T."/>
            <person name="Desai A."/>
            <person name="Elliott G."/>
            <person name="Erb T."/>
            <person name="Fronick C."/>
            <person name="Gaige T."/>
            <person name="Haakenson W."/>
            <person name="Haglund K."/>
            <person name="Holmes A."/>
            <person name="Harkins R."/>
            <person name="Kim K."/>
            <person name="Kruchowski S.S."/>
            <person name="Strong C.M."/>
            <person name="Grewal N."/>
            <person name="Goyea E."/>
            <person name="Hou S."/>
            <person name="Levy A."/>
            <person name="Martinka S."/>
            <person name="Mead K."/>
            <person name="McLellan M.D."/>
            <person name="Meyer R."/>
            <person name="Randall-Maher J."/>
            <person name="Tomlinson C."/>
            <person name="Dauphin-Kohlberg S."/>
            <person name="Kozlowicz-Reilly A."/>
            <person name="Shah N."/>
            <person name="Swearengen-Shahid S."/>
            <person name="Snider J."/>
            <person name="Strong J.T."/>
            <person name="Thompson J."/>
            <person name="Yoakum M."/>
            <person name="Leonard S."/>
            <person name="Pearman C."/>
            <person name="Trani L."/>
            <person name="Radionenko M."/>
            <person name="Waligorski J.E."/>
            <person name="Wang C."/>
            <person name="Rock S.M."/>
            <person name="Tin-Wollam A.-M."/>
            <person name="Maupin R."/>
            <person name="Latreille P."/>
            <person name="Wendl M.C."/>
            <person name="Yang S.-P."/>
            <person name="Pohl C."/>
            <person name="Wallis J.W."/>
            <person name="Spieth J."/>
            <person name="Bieri T.A."/>
            <person name="Berkowicz N."/>
            <person name="Nelson J.O."/>
            <person name="Osborne J."/>
            <person name="Ding L."/>
            <person name="Meyer R."/>
            <person name="Sabo A."/>
            <person name="Shotland Y."/>
            <person name="Sinha P."/>
            <person name="Wohldmann P.E."/>
            <person name="Cook L.L."/>
            <person name="Hickenbotham M.T."/>
            <person name="Eldred J."/>
            <person name="Williams D."/>
            <person name="Jones T.A."/>
            <person name="She X."/>
            <person name="Ciccarelli F.D."/>
            <person name="Izaurralde E."/>
            <person name="Taylor J."/>
            <person name="Schmutz J."/>
            <person name="Myers R.M."/>
            <person name="Cox D.R."/>
            <person name="Huang X."/>
            <person name="McPherson J.D."/>
            <person name="Mardis E.R."/>
            <person name="Clifton S.W."/>
            <person name="Warren W.C."/>
            <person name="Chinwalla A.T."/>
            <person name="Eddy S.R."/>
            <person name="Marra M.A."/>
            <person name="Ovcharenko I."/>
            <person name="Furey T.S."/>
            <person name="Miller W."/>
            <person name="Eichler E.E."/>
            <person name="Bork P."/>
            <person name="Suyama M."/>
            <person name="Torrents D."/>
            <person name="Waterston R.H."/>
            <person name="Wilson R.K."/>
        </authorList>
    </citation>
    <scope>NUCLEOTIDE SEQUENCE [LARGE SCALE GENOMIC DNA]</scope>
</reference>
<reference key="4">
    <citation type="submission" date="2005-07" db="EMBL/GenBank/DDBJ databases">
        <authorList>
            <person name="Mural R.J."/>
            <person name="Istrail S."/>
            <person name="Sutton G.G."/>
            <person name="Florea L."/>
            <person name="Halpern A.L."/>
            <person name="Mobarry C.M."/>
            <person name="Lippert R."/>
            <person name="Walenz B."/>
            <person name="Shatkay H."/>
            <person name="Dew I."/>
            <person name="Miller J.R."/>
            <person name="Flanigan M.J."/>
            <person name="Edwards N.J."/>
            <person name="Bolanos R."/>
            <person name="Fasulo D."/>
            <person name="Halldorsson B.V."/>
            <person name="Hannenhalli S."/>
            <person name="Turner R."/>
            <person name="Yooseph S."/>
            <person name="Lu F."/>
            <person name="Nusskern D.R."/>
            <person name="Shue B.C."/>
            <person name="Zheng X.H."/>
            <person name="Zhong F."/>
            <person name="Delcher A.L."/>
            <person name="Huson D.H."/>
            <person name="Kravitz S.A."/>
            <person name="Mouchard L."/>
            <person name="Reinert K."/>
            <person name="Remington K.A."/>
            <person name="Clark A.G."/>
            <person name="Waterman M.S."/>
            <person name="Eichler E.E."/>
            <person name="Adams M.D."/>
            <person name="Hunkapiller M.W."/>
            <person name="Myers E.W."/>
            <person name="Venter J.C."/>
        </authorList>
    </citation>
    <scope>NUCLEOTIDE SEQUENCE [LARGE SCALE GENOMIC DNA]</scope>
</reference>
<reference key="5">
    <citation type="journal article" date="2004" name="Genome Res.">
        <title>The status, quality, and expansion of the NIH full-length cDNA project: the Mammalian Gene Collection (MGC).</title>
        <authorList>
            <consortium name="The MGC Project Team"/>
        </authorList>
    </citation>
    <scope>NUCLEOTIDE SEQUENCE [LARGE SCALE MRNA] OF 6-1132 (ISOFORM 1)</scope>
    <source>
        <tissue>Muscle</tissue>
        <tissue>Placenta</tissue>
        <tissue>Prostate</tissue>
    </source>
</reference>
<reference key="6">
    <citation type="journal article" date="1998" name="DNA Res.">
        <title>Prediction of the coding sequences of unidentified human genes. XI. The complete sequences of 100 new cDNA clones from brain which code for large proteins in vitro.</title>
        <authorList>
            <person name="Nagase T."/>
            <person name="Ishikawa K."/>
            <person name="Suyama M."/>
            <person name="Kikuno R."/>
            <person name="Miyajima N."/>
            <person name="Tanaka A."/>
            <person name="Kotani H."/>
            <person name="Nomura N."/>
            <person name="Ohara O."/>
        </authorList>
    </citation>
    <scope>NUCLEOTIDE SEQUENCE [LARGE SCALE MRNA] OF 104-1132 (ISOFORMS 1/2)</scope>
    <source>
        <tissue>Brain</tissue>
    </source>
</reference>
<reference key="7">
    <citation type="journal article" date="2008" name="Proc. Natl. Acad. Sci. U.S.A.">
        <title>A quantitative atlas of mitotic phosphorylation.</title>
        <authorList>
            <person name="Dephoure N."/>
            <person name="Zhou C."/>
            <person name="Villen J."/>
            <person name="Beausoleil S.A."/>
            <person name="Bakalarski C.E."/>
            <person name="Elledge S.J."/>
            <person name="Gygi S.P."/>
        </authorList>
    </citation>
    <scope>PHOSPHORYLATION [LARGE SCALE ANALYSIS] AT SER-608</scope>
    <scope>IDENTIFICATION BY MASS SPECTROMETRY [LARGE SCALE ANALYSIS]</scope>
    <source>
        <tissue>Cervix carcinoma</tissue>
    </source>
</reference>
<proteinExistence type="evidence at protein level"/>
<feature type="chain" id="PRO_0000321894" description="Protein sel-1 homolog 3">
    <location>
        <begin position="1"/>
        <end position="1132"/>
    </location>
</feature>
<feature type="transmembrane region" description="Helical" evidence="1">
    <location>
        <begin position="1057"/>
        <end position="1077"/>
    </location>
</feature>
<feature type="repeat" description="Sel1-like 1">
    <location>
        <begin position="575"/>
        <end position="609"/>
    </location>
</feature>
<feature type="repeat" description="Sel1-like 2">
    <location>
        <begin position="611"/>
        <end position="647"/>
    </location>
</feature>
<feature type="repeat" description="Sel1-like 3">
    <location>
        <begin position="694"/>
        <end position="730"/>
    </location>
</feature>
<feature type="repeat" description="Sel1-like 4">
    <location>
        <begin position="732"/>
        <end position="767"/>
    </location>
</feature>
<feature type="repeat" description="Sel1-like 5">
    <location>
        <begin position="768"/>
        <end position="800"/>
    </location>
</feature>
<feature type="repeat" description="Sel1-like 6">
    <location>
        <begin position="801"/>
        <end position="839"/>
    </location>
</feature>
<feature type="repeat" description="Sel1-like 7">
    <location>
        <begin position="840"/>
        <end position="877"/>
    </location>
</feature>
<feature type="repeat" description="Sel1-like 8">
    <location>
        <begin position="952"/>
        <end position="988"/>
    </location>
</feature>
<feature type="region of interest" description="Disordered" evidence="2">
    <location>
        <begin position="1"/>
        <end position="24"/>
    </location>
</feature>
<feature type="region of interest" description="Disordered" evidence="2">
    <location>
        <begin position="1087"/>
        <end position="1132"/>
    </location>
</feature>
<feature type="compositionally biased region" description="Low complexity" evidence="2">
    <location>
        <begin position="1097"/>
        <end position="1116"/>
    </location>
</feature>
<feature type="compositionally biased region" description="Polar residues" evidence="2">
    <location>
        <begin position="1119"/>
        <end position="1132"/>
    </location>
</feature>
<feature type="modified residue" description="Phosphoserine" evidence="6">
    <location>
        <position position="608"/>
    </location>
</feature>
<feature type="glycosylation site" description="N-linked (GlcNAc...) asparagine" evidence="1">
    <location>
        <position position="201"/>
    </location>
</feature>
<feature type="glycosylation site" description="N-linked (GlcNAc...) asparagine" evidence="1">
    <location>
        <position position="382"/>
    </location>
</feature>
<feature type="glycosylation site" description="N-linked (GlcNAc...) asparagine" evidence="1">
    <location>
        <position position="527"/>
    </location>
</feature>
<feature type="glycosylation site" description="N-linked (GlcNAc...) asparagine" evidence="1">
    <location>
        <position position="937"/>
    </location>
</feature>
<feature type="splice variant" id="VSP_031811" description="In isoform 3." evidence="3">
    <location>
        <begin position="1"/>
        <end position="153"/>
    </location>
</feature>
<feature type="splice variant" id="VSP_031812" description="In isoform 2." evidence="4">
    <original>MQRRGAGLGWPRQQQQQPPPLAVGPRAAAMVPSGGVPQGLGGRSACALLLLCY</original>
    <variation>MAPRPKKQPDKNPLHGRE</variation>
    <location>
        <begin position="1"/>
        <end position="53"/>
    </location>
</feature>
<feature type="sequence variant" id="VAR_053965" description="In dbSNP:rs16877661.">
    <original>Q</original>
    <variation>R</variation>
    <location>
        <position position="107"/>
    </location>
</feature>
<feature type="sequence variant" id="VAR_039369" description="In dbSNP:rs16877591.">
    <original>I</original>
    <variation>V</variation>
    <location>
        <position position="401"/>
    </location>
</feature>
<feature type="sequence variant" id="VAR_053966" description="In dbSNP:rs16877591.">
    <original>I</original>
    <variation>V</variation>
    <location>
        <position position="554"/>
    </location>
</feature>
<feature type="sequence variant" id="VAR_053967" description="In dbSNP:rs2286866.">
    <original>W</original>
    <variation>C</variation>
    <location>
        <position position="1054"/>
    </location>
</feature>
<feature type="sequence variant" id="VAR_053968" description="In dbSNP:rs7671168.">
    <original>P</original>
    <variation>S</variation>
    <location>
        <position position="1122"/>
    </location>
</feature>
<feature type="sequence conflict" description="In Ref. 5; AAH60867." evidence="5" ref="5">
    <original>S</original>
    <variation>G</variation>
    <location>
        <position position="152"/>
    </location>
</feature>
<feature type="sequence conflict" description="In Ref. 5; AAH60867." evidence="5" ref="5">
    <original>Y</original>
    <variation>I</variation>
    <location>
        <position position="825"/>
    </location>
</feature>
<evidence type="ECO:0000255" key="1"/>
<evidence type="ECO:0000256" key="2">
    <source>
        <dbReference type="SAM" id="MobiDB-lite"/>
    </source>
</evidence>
<evidence type="ECO:0000303" key="3">
    <source>
    </source>
</evidence>
<evidence type="ECO:0000303" key="4">
    <source>
    </source>
</evidence>
<evidence type="ECO:0000305" key="5"/>
<evidence type="ECO:0007744" key="6">
    <source>
    </source>
</evidence>
<dbReference type="EMBL" id="AK289687">
    <property type="protein sequence ID" value="BAF82376.1"/>
    <property type="molecule type" value="mRNA"/>
</dbReference>
<dbReference type="EMBL" id="CR749817">
    <property type="protein sequence ID" value="CAH18677.1"/>
    <property type="molecule type" value="mRNA"/>
</dbReference>
<dbReference type="EMBL" id="AC092436">
    <property type="status" value="NOT_ANNOTATED_CDS"/>
    <property type="molecule type" value="Genomic_DNA"/>
</dbReference>
<dbReference type="EMBL" id="AC133961">
    <property type="status" value="NOT_ANNOTATED_CDS"/>
    <property type="molecule type" value="Genomic_DNA"/>
</dbReference>
<dbReference type="EMBL" id="CH471069">
    <property type="protein sequence ID" value="EAW92843.1"/>
    <property type="molecule type" value="Genomic_DNA"/>
</dbReference>
<dbReference type="EMBL" id="BC009945">
    <property type="protein sequence ID" value="AAH09945.2"/>
    <property type="molecule type" value="mRNA"/>
</dbReference>
<dbReference type="EMBL" id="BC029422">
    <property type="protein sequence ID" value="AAH29422.1"/>
    <property type="status" value="ALT_SEQ"/>
    <property type="molecule type" value="mRNA"/>
</dbReference>
<dbReference type="EMBL" id="BC060867">
    <property type="protein sequence ID" value="AAH60867.1"/>
    <property type="status" value="ALT_FRAME"/>
    <property type="molecule type" value="mRNA"/>
</dbReference>
<dbReference type="EMBL" id="AB018289">
    <property type="protein sequence ID" value="BAA34466.1"/>
    <property type="molecule type" value="mRNA"/>
</dbReference>
<dbReference type="CCDS" id="CCDS47037.1">
    <molecule id="Q68CR1-1"/>
</dbReference>
<dbReference type="CCDS" id="CCDS75113.1">
    <molecule id="Q68CR1-2"/>
</dbReference>
<dbReference type="CCDS" id="CCDS77907.1">
    <molecule id="Q68CR1-3"/>
</dbReference>
<dbReference type="RefSeq" id="NP_001284521.1">
    <molecule id="Q68CR1-2"/>
    <property type="nucleotide sequence ID" value="NM_001297592.2"/>
</dbReference>
<dbReference type="RefSeq" id="NP_001284523.1">
    <molecule id="Q68CR1-3"/>
    <property type="nucleotide sequence ID" value="NM_001297594.2"/>
</dbReference>
<dbReference type="RefSeq" id="NP_056002.2">
    <molecule id="Q68CR1-1"/>
    <property type="nucleotide sequence ID" value="NM_015187.5"/>
</dbReference>
<dbReference type="SMR" id="Q68CR1"/>
<dbReference type="BioGRID" id="116836">
    <property type="interactions" value="102"/>
</dbReference>
<dbReference type="FunCoup" id="Q68CR1">
    <property type="interactions" value="252"/>
</dbReference>
<dbReference type="IntAct" id="Q68CR1">
    <property type="interactions" value="51"/>
</dbReference>
<dbReference type="STRING" id="9606.ENSP00000382767"/>
<dbReference type="GlyCosmos" id="Q68CR1">
    <property type="glycosylation" value="4 sites, No reported glycans"/>
</dbReference>
<dbReference type="GlyGen" id="Q68CR1">
    <property type="glycosylation" value="10 sites, 7 N-linked glycans (6 sites), 2 O-linked glycans (3 sites)"/>
</dbReference>
<dbReference type="iPTMnet" id="Q68CR1"/>
<dbReference type="PhosphoSitePlus" id="Q68CR1"/>
<dbReference type="SwissPalm" id="Q68CR1"/>
<dbReference type="BioMuta" id="SEL1L3"/>
<dbReference type="DMDM" id="172045726"/>
<dbReference type="jPOST" id="Q68CR1"/>
<dbReference type="MassIVE" id="Q68CR1"/>
<dbReference type="PaxDb" id="9606-ENSP00000382767"/>
<dbReference type="PeptideAtlas" id="Q68CR1"/>
<dbReference type="ProteomicsDB" id="66023">
    <molecule id="Q68CR1-1"/>
</dbReference>
<dbReference type="ProteomicsDB" id="66024">
    <molecule id="Q68CR1-2"/>
</dbReference>
<dbReference type="ProteomicsDB" id="66025">
    <molecule id="Q68CR1-3"/>
</dbReference>
<dbReference type="Pumba" id="Q68CR1"/>
<dbReference type="Antibodypedia" id="51970">
    <property type="antibodies" value="67 antibodies from 15 providers"/>
</dbReference>
<dbReference type="DNASU" id="23231"/>
<dbReference type="Ensembl" id="ENST00000264868.9">
    <molecule id="Q68CR1-2"/>
    <property type="protein sequence ID" value="ENSP00000264868.5"/>
    <property type="gene ID" value="ENSG00000091490.11"/>
</dbReference>
<dbReference type="Ensembl" id="ENST00000399878.8">
    <molecule id="Q68CR1-1"/>
    <property type="protein sequence ID" value="ENSP00000382767.3"/>
    <property type="gene ID" value="ENSG00000091490.11"/>
</dbReference>
<dbReference type="Ensembl" id="ENST00000502949.5">
    <molecule id="Q68CR1-3"/>
    <property type="protein sequence ID" value="ENSP00000425438.1"/>
    <property type="gene ID" value="ENSG00000091490.11"/>
</dbReference>
<dbReference type="GeneID" id="23231"/>
<dbReference type="KEGG" id="hsa:23231"/>
<dbReference type="MANE-Select" id="ENST00000399878.8">
    <property type="protein sequence ID" value="ENSP00000382767.3"/>
    <property type="RefSeq nucleotide sequence ID" value="NM_015187.5"/>
    <property type="RefSeq protein sequence ID" value="NP_056002.2"/>
</dbReference>
<dbReference type="UCSC" id="uc003gru.5">
    <molecule id="Q68CR1-1"/>
    <property type="organism name" value="human"/>
</dbReference>
<dbReference type="AGR" id="HGNC:29108"/>
<dbReference type="CTD" id="23231"/>
<dbReference type="DisGeNET" id="23231"/>
<dbReference type="GeneCards" id="SEL1L3"/>
<dbReference type="HGNC" id="HGNC:29108">
    <property type="gene designation" value="SEL1L3"/>
</dbReference>
<dbReference type="HPA" id="ENSG00000091490">
    <property type="expression patterns" value="Tissue enhanced (lymphoid)"/>
</dbReference>
<dbReference type="MIM" id="619914">
    <property type="type" value="gene"/>
</dbReference>
<dbReference type="neXtProt" id="NX_Q68CR1"/>
<dbReference type="OpenTargets" id="ENSG00000091490"/>
<dbReference type="PharmGKB" id="PA165664479"/>
<dbReference type="VEuPathDB" id="HostDB:ENSG00000091490"/>
<dbReference type="eggNOG" id="KOG1550">
    <property type="taxonomic scope" value="Eukaryota"/>
</dbReference>
<dbReference type="GeneTree" id="ENSGT00940000159983"/>
<dbReference type="HOGENOM" id="CLU_011209_0_0_1"/>
<dbReference type="InParanoid" id="Q68CR1"/>
<dbReference type="OMA" id="HAGYKHT"/>
<dbReference type="OrthoDB" id="272077at2759"/>
<dbReference type="PAN-GO" id="Q68CR1">
    <property type="GO annotations" value="0 GO annotations based on evolutionary models"/>
</dbReference>
<dbReference type="PhylomeDB" id="Q68CR1"/>
<dbReference type="TreeFam" id="TF315257"/>
<dbReference type="PathwayCommons" id="Q68CR1"/>
<dbReference type="SignaLink" id="Q68CR1"/>
<dbReference type="BioGRID-ORCS" id="23231">
    <property type="hits" value="14 hits in 1155 CRISPR screens"/>
</dbReference>
<dbReference type="ChiTaRS" id="SEL1L3">
    <property type="organism name" value="human"/>
</dbReference>
<dbReference type="GenomeRNAi" id="23231"/>
<dbReference type="Pharos" id="Q68CR1">
    <property type="development level" value="Tdark"/>
</dbReference>
<dbReference type="PRO" id="PR:Q68CR1"/>
<dbReference type="Proteomes" id="UP000005640">
    <property type="component" value="Chromosome 4"/>
</dbReference>
<dbReference type="RNAct" id="Q68CR1">
    <property type="molecule type" value="protein"/>
</dbReference>
<dbReference type="Bgee" id="ENSG00000091490">
    <property type="expression patterns" value="Expressed in pylorus and 177 other cell types or tissues"/>
</dbReference>
<dbReference type="ExpressionAtlas" id="Q68CR1">
    <property type="expression patterns" value="baseline and differential"/>
</dbReference>
<dbReference type="GO" id="GO:0016020">
    <property type="term" value="C:membrane"/>
    <property type="evidence" value="ECO:0007669"/>
    <property type="project" value="UniProtKB-SubCell"/>
</dbReference>
<dbReference type="FunFam" id="1.25.40.10:FF:000129">
    <property type="entry name" value="protein sel-1 homolog 3 isoform X1"/>
    <property type="match status" value="1"/>
</dbReference>
<dbReference type="FunFam" id="1.25.40.10:FF:000171">
    <property type="entry name" value="protein sel-1 homolog 3 isoform X1"/>
    <property type="match status" value="1"/>
</dbReference>
<dbReference type="FunFam" id="1.25.40.10:FF:000246">
    <property type="entry name" value="SEL1L family member 3"/>
    <property type="match status" value="1"/>
</dbReference>
<dbReference type="Gene3D" id="1.25.40.10">
    <property type="entry name" value="Tetratricopeptide repeat domain"/>
    <property type="match status" value="3"/>
</dbReference>
<dbReference type="InterPro" id="IPR013320">
    <property type="entry name" value="ConA-like_dom_sf"/>
</dbReference>
<dbReference type="InterPro" id="IPR042756">
    <property type="entry name" value="Sel-1L3"/>
</dbReference>
<dbReference type="InterPro" id="IPR006597">
    <property type="entry name" value="Sel1-like"/>
</dbReference>
<dbReference type="InterPro" id="IPR011990">
    <property type="entry name" value="TPR-like_helical_dom_sf"/>
</dbReference>
<dbReference type="PANTHER" id="PTHR44444">
    <property type="entry name" value="PROTEIN SEL-1 HOMOLOG 3"/>
    <property type="match status" value="1"/>
</dbReference>
<dbReference type="PANTHER" id="PTHR44444:SF1">
    <property type="entry name" value="PROTEIN SEL-1 HOMOLOG 3"/>
    <property type="match status" value="1"/>
</dbReference>
<dbReference type="Pfam" id="PF08238">
    <property type="entry name" value="Sel1"/>
    <property type="match status" value="6"/>
</dbReference>
<dbReference type="SMART" id="SM00671">
    <property type="entry name" value="SEL1"/>
    <property type="match status" value="8"/>
</dbReference>
<dbReference type="SUPFAM" id="SSF49899">
    <property type="entry name" value="Concanavalin A-like lectins/glucanases"/>
    <property type="match status" value="1"/>
</dbReference>
<dbReference type="SUPFAM" id="SSF81901">
    <property type="entry name" value="HCP-like"/>
    <property type="match status" value="2"/>
</dbReference>